<feature type="chain" id="PRO_1000195673" description="Large ribosomal subunit protein uL11">
    <location>
        <begin position="1"/>
        <end position="142"/>
    </location>
</feature>
<comment type="function">
    <text evidence="1">Forms part of the ribosomal stalk which helps the ribosome interact with GTP-bound translation factors.</text>
</comment>
<comment type="subunit">
    <text evidence="1">Part of the ribosomal stalk of the 50S ribosomal subunit. Interacts with L10 and the large rRNA to form the base of the stalk. L10 forms an elongated spine to which L12 dimers bind in a sequential fashion forming a multimeric L10(L12)X complex.</text>
</comment>
<comment type="PTM">
    <text evidence="1">One or more lysine residues are methylated.</text>
</comment>
<comment type="similarity">
    <text evidence="1">Belongs to the universal ribosomal protein uL11 family.</text>
</comment>
<accession>B1MH86</accession>
<gene>
    <name evidence="1" type="primary">rplK</name>
    <name type="ordered locus">MAB_3893c</name>
</gene>
<dbReference type="EMBL" id="CU458896">
    <property type="protein sequence ID" value="CAM63967.1"/>
    <property type="molecule type" value="Genomic_DNA"/>
</dbReference>
<dbReference type="RefSeq" id="WP_005061484.1">
    <property type="nucleotide sequence ID" value="NZ_MLCG01000001.1"/>
</dbReference>
<dbReference type="SMR" id="B1MH86"/>
<dbReference type="GeneID" id="93380831"/>
<dbReference type="KEGG" id="mab:MAB_3893c"/>
<dbReference type="Proteomes" id="UP000007137">
    <property type="component" value="Chromosome"/>
</dbReference>
<dbReference type="GO" id="GO:0022625">
    <property type="term" value="C:cytosolic large ribosomal subunit"/>
    <property type="evidence" value="ECO:0007669"/>
    <property type="project" value="TreeGrafter"/>
</dbReference>
<dbReference type="GO" id="GO:0070180">
    <property type="term" value="F:large ribosomal subunit rRNA binding"/>
    <property type="evidence" value="ECO:0007669"/>
    <property type="project" value="UniProtKB-UniRule"/>
</dbReference>
<dbReference type="GO" id="GO:0003735">
    <property type="term" value="F:structural constituent of ribosome"/>
    <property type="evidence" value="ECO:0007669"/>
    <property type="project" value="InterPro"/>
</dbReference>
<dbReference type="GO" id="GO:0006412">
    <property type="term" value="P:translation"/>
    <property type="evidence" value="ECO:0007669"/>
    <property type="project" value="UniProtKB-UniRule"/>
</dbReference>
<dbReference type="CDD" id="cd00349">
    <property type="entry name" value="Ribosomal_L11"/>
    <property type="match status" value="1"/>
</dbReference>
<dbReference type="FunFam" id="1.10.10.250:FF:000001">
    <property type="entry name" value="50S ribosomal protein L11"/>
    <property type="match status" value="1"/>
</dbReference>
<dbReference type="FunFam" id="3.30.1550.10:FF:000001">
    <property type="entry name" value="50S ribosomal protein L11"/>
    <property type="match status" value="1"/>
</dbReference>
<dbReference type="Gene3D" id="1.10.10.250">
    <property type="entry name" value="Ribosomal protein L11, C-terminal domain"/>
    <property type="match status" value="1"/>
</dbReference>
<dbReference type="Gene3D" id="3.30.1550.10">
    <property type="entry name" value="Ribosomal protein L11/L12, N-terminal domain"/>
    <property type="match status" value="1"/>
</dbReference>
<dbReference type="HAMAP" id="MF_00736">
    <property type="entry name" value="Ribosomal_uL11"/>
    <property type="match status" value="1"/>
</dbReference>
<dbReference type="InterPro" id="IPR000911">
    <property type="entry name" value="Ribosomal_uL11"/>
</dbReference>
<dbReference type="InterPro" id="IPR006519">
    <property type="entry name" value="Ribosomal_uL11_bac-typ"/>
</dbReference>
<dbReference type="InterPro" id="IPR020783">
    <property type="entry name" value="Ribosomal_uL11_C"/>
</dbReference>
<dbReference type="InterPro" id="IPR036769">
    <property type="entry name" value="Ribosomal_uL11_C_sf"/>
</dbReference>
<dbReference type="InterPro" id="IPR020785">
    <property type="entry name" value="Ribosomal_uL11_CS"/>
</dbReference>
<dbReference type="InterPro" id="IPR020784">
    <property type="entry name" value="Ribosomal_uL11_N"/>
</dbReference>
<dbReference type="InterPro" id="IPR036796">
    <property type="entry name" value="Ribosomal_uL11_N_sf"/>
</dbReference>
<dbReference type="NCBIfam" id="TIGR01632">
    <property type="entry name" value="L11_bact"/>
    <property type="match status" value="1"/>
</dbReference>
<dbReference type="PANTHER" id="PTHR11661">
    <property type="entry name" value="60S RIBOSOMAL PROTEIN L12"/>
    <property type="match status" value="1"/>
</dbReference>
<dbReference type="PANTHER" id="PTHR11661:SF1">
    <property type="entry name" value="LARGE RIBOSOMAL SUBUNIT PROTEIN UL11M"/>
    <property type="match status" value="1"/>
</dbReference>
<dbReference type="Pfam" id="PF00298">
    <property type="entry name" value="Ribosomal_L11"/>
    <property type="match status" value="1"/>
</dbReference>
<dbReference type="Pfam" id="PF03946">
    <property type="entry name" value="Ribosomal_L11_N"/>
    <property type="match status" value="1"/>
</dbReference>
<dbReference type="SMART" id="SM00649">
    <property type="entry name" value="RL11"/>
    <property type="match status" value="1"/>
</dbReference>
<dbReference type="SUPFAM" id="SSF54747">
    <property type="entry name" value="Ribosomal L11/L12e N-terminal domain"/>
    <property type="match status" value="1"/>
</dbReference>
<dbReference type="SUPFAM" id="SSF46906">
    <property type="entry name" value="Ribosomal protein L11, C-terminal domain"/>
    <property type="match status" value="1"/>
</dbReference>
<dbReference type="PROSITE" id="PS00359">
    <property type="entry name" value="RIBOSOMAL_L11"/>
    <property type="match status" value="1"/>
</dbReference>
<organism>
    <name type="scientific">Mycobacteroides abscessus (strain ATCC 19977 / DSM 44196 / CCUG 20993 / CIP 104536 / JCM 13569 / NCTC 13031 / TMC 1543 / L948)</name>
    <name type="common">Mycobacterium abscessus</name>
    <dbReference type="NCBI Taxonomy" id="561007"/>
    <lineage>
        <taxon>Bacteria</taxon>
        <taxon>Bacillati</taxon>
        <taxon>Actinomycetota</taxon>
        <taxon>Actinomycetes</taxon>
        <taxon>Mycobacteriales</taxon>
        <taxon>Mycobacteriaceae</taxon>
        <taxon>Mycobacteroides</taxon>
        <taxon>Mycobacteroides abscessus</taxon>
    </lineage>
</organism>
<keyword id="KW-0488">Methylation</keyword>
<keyword id="KW-1185">Reference proteome</keyword>
<keyword id="KW-0687">Ribonucleoprotein</keyword>
<keyword id="KW-0689">Ribosomal protein</keyword>
<keyword id="KW-0694">RNA-binding</keyword>
<keyword id="KW-0699">rRNA-binding</keyword>
<reference key="1">
    <citation type="journal article" date="2009" name="PLoS ONE">
        <title>Non mycobacterial virulence genes in the genome of the emerging pathogen Mycobacterium abscessus.</title>
        <authorList>
            <person name="Ripoll F."/>
            <person name="Pasek S."/>
            <person name="Schenowitz C."/>
            <person name="Dossat C."/>
            <person name="Barbe V."/>
            <person name="Rottman M."/>
            <person name="Macheras E."/>
            <person name="Heym B."/>
            <person name="Herrmann J.L."/>
            <person name="Daffe M."/>
            <person name="Brosch R."/>
            <person name="Risler J.L."/>
            <person name="Gaillard J.L."/>
        </authorList>
    </citation>
    <scope>NUCLEOTIDE SEQUENCE [LARGE SCALE GENOMIC DNA]</scope>
    <source>
        <strain>ATCC 19977 / DSM 44196 / CCUG 20993 / CIP 104536 / JCM 13569 / NCTC 13031 / TMC 1543 / L948</strain>
    </source>
</reference>
<proteinExistence type="inferred from homology"/>
<sequence length="142" mass="15030">MAPKKKVVGLIKLQIKAGEANPAPPVGPALGQHGVNIMEFCKAYNAATESQRGNVIPVEISVYEDRSFTFALKTPPAAKLLLKAAGVPKGSGEPHKTKVAKVSWDQVREIAETKKEDLNANDIDAAAKIIAGTARSMGITVE</sequence>
<protein>
    <recommendedName>
        <fullName evidence="1">Large ribosomal subunit protein uL11</fullName>
    </recommendedName>
    <alternativeName>
        <fullName evidence="2">50S ribosomal protein L11</fullName>
    </alternativeName>
</protein>
<evidence type="ECO:0000255" key="1">
    <source>
        <dbReference type="HAMAP-Rule" id="MF_00736"/>
    </source>
</evidence>
<evidence type="ECO:0000305" key="2"/>
<name>RL11_MYCA9</name>